<organism>
    <name type="scientific">Ralstonia nicotianae (strain ATCC BAA-1114 / GMI1000)</name>
    <name type="common">Ralstonia solanacearum</name>
    <dbReference type="NCBI Taxonomy" id="267608"/>
    <lineage>
        <taxon>Bacteria</taxon>
        <taxon>Pseudomonadati</taxon>
        <taxon>Pseudomonadota</taxon>
        <taxon>Betaproteobacteria</taxon>
        <taxon>Burkholderiales</taxon>
        <taxon>Burkholderiaceae</taxon>
        <taxon>Ralstonia</taxon>
        <taxon>Ralstonia solanacearum species complex</taxon>
    </lineage>
</organism>
<accession>Q8XYW2</accession>
<sequence length="168" mass="17780">MNWMDIRIGQGYDVHALVEGRKLILGGVEIPHTRGLLGHSDADALLHAITDALFGAAGLGDIGRHFPDTDPAFAGADSRVLLREAVRRVREAGYDVGNVDATVIAQKPKLAPHVPGMVANLAADLGIAPGRCNVKAKTNEKLGFEGREDGIVAQAAVLIYRAEAAEQD</sequence>
<comment type="function">
    <text evidence="1">Involved in the biosynthesis of isopentenyl diphosphate (IPP) and dimethylallyl diphosphate (DMAPP), two major building blocks of isoprenoid compounds. Catalyzes the conversion of 4-diphosphocytidyl-2-C-methyl-D-erythritol 2-phosphate (CDP-ME2P) to 2-C-methyl-D-erythritol 2,4-cyclodiphosphate (ME-CPP) with a corresponding release of cytidine 5-monophosphate (CMP).</text>
</comment>
<comment type="catalytic activity">
    <reaction evidence="1">
        <text>4-CDP-2-C-methyl-D-erythritol 2-phosphate = 2-C-methyl-D-erythritol 2,4-cyclic diphosphate + CMP</text>
        <dbReference type="Rhea" id="RHEA:23864"/>
        <dbReference type="ChEBI" id="CHEBI:57919"/>
        <dbReference type="ChEBI" id="CHEBI:58483"/>
        <dbReference type="ChEBI" id="CHEBI:60377"/>
        <dbReference type="EC" id="4.6.1.12"/>
    </reaction>
</comment>
<comment type="cofactor">
    <cofactor evidence="1">
        <name>a divalent metal cation</name>
        <dbReference type="ChEBI" id="CHEBI:60240"/>
    </cofactor>
    <text evidence="1">Binds 1 divalent metal cation per subunit.</text>
</comment>
<comment type="pathway">
    <text evidence="1">Isoprenoid biosynthesis; isopentenyl diphosphate biosynthesis via DXP pathway; isopentenyl diphosphate from 1-deoxy-D-xylulose 5-phosphate: step 4/6.</text>
</comment>
<comment type="subunit">
    <text evidence="1">Homotrimer.</text>
</comment>
<comment type="similarity">
    <text evidence="1">Belongs to the IspF family.</text>
</comment>
<evidence type="ECO:0000255" key="1">
    <source>
        <dbReference type="HAMAP-Rule" id="MF_00107"/>
    </source>
</evidence>
<gene>
    <name evidence="1" type="primary">ispF</name>
    <name type="ordered locus">RSc1644</name>
    <name type="ORF">RS04019</name>
</gene>
<feature type="chain" id="PRO_0000189498" description="2-C-methyl-D-erythritol 2,4-cyclodiphosphate synthase">
    <location>
        <begin position="1"/>
        <end position="168"/>
    </location>
</feature>
<feature type="binding site" evidence="1">
    <location>
        <begin position="13"/>
        <end position="15"/>
    </location>
    <ligand>
        <name>4-CDP-2-C-methyl-D-erythritol 2-phosphate</name>
        <dbReference type="ChEBI" id="CHEBI:57919"/>
    </ligand>
</feature>
<feature type="binding site" evidence="1">
    <location>
        <position position="13"/>
    </location>
    <ligand>
        <name>a divalent metal cation</name>
        <dbReference type="ChEBI" id="CHEBI:60240"/>
    </ligand>
</feature>
<feature type="binding site" evidence="1">
    <location>
        <position position="15"/>
    </location>
    <ligand>
        <name>a divalent metal cation</name>
        <dbReference type="ChEBI" id="CHEBI:60240"/>
    </ligand>
</feature>
<feature type="binding site" evidence="1">
    <location>
        <begin position="39"/>
        <end position="40"/>
    </location>
    <ligand>
        <name>4-CDP-2-C-methyl-D-erythritol 2-phosphate</name>
        <dbReference type="ChEBI" id="CHEBI:57919"/>
    </ligand>
</feature>
<feature type="binding site" evidence="1">
    <location>
        <position position="47"/>
    </location>
    <ligand>
        <name>a divalent metal cation</name>
        <dbReference type="ChEBI" id="CHEBI:60240"/>
    </ligand>
</feature>
<feature type="binding site" evidence="1">
    <location>
        <begin position="61"/>
        <end position="63"/>
    </location>
    <ligand>
        <name>4-CDP-2-C-methyl-D-erythritol 2-phosphate</name>
        <dbReference type="ChEBI" id="CHEBI:57919"/>
    </ligand>
</feature>
<feature type="binding site" evidence="1">
    <location>
        <begin position="66"/>
        <end position="70"/>
    </location>
    <ligand>
        <name>4-CDP-2-C-methyl-D-erythritol 2-phosphate</name>
        <dbReference type="ChEBI" id="CHEBI:57919"/>
    </ligand>
</feature>
<feature type="binding site" evidence="1">
    <location>
        <position position="144"/>
    </location>
    <ligand>
        <name>4-CDP-2-C-methyl-D-erythritol 2-phosphate</name>
        <dbReference type="ChEBI" id="CHEBI:57919"/>
    </ligand>
</feature>
<feature type="binding site" evidence="1">
    <location>
        <position position="147"/>
    </location>
    <ligand>
        <name>4-CDP-2-C-methyl-D-erythritol 2-phosphate</name>
        <dbReference type="ChEBI" id="CHEBI:57919"/>
    </ligand>
</feature>
<feature type="site" description="Transition state stabilizer" evidence="1">
    <location>
        <position position="39"/>
    </location>
</feature>
<feature type="site" description="Transition state stabilizer" evidence="1">
    <location>
        <position position="138"/>
    </location>
</feature>
<name>ISPF_RALN1</name>
<reference key="1">
    <citation type="journal article" date="2002" name="Nature">
        <title>Genome sequence of the plant pathogen Ralstonia solanacearum.</title>
        <authorList>
            <person name="Salanoubat M."/>
            <person name="Genin S."/>
            <person name="Artiguenave F."/>
            <person name="Gouzy J."/>
            <person name="Mangenot S."/>
            <person name="Arlat M."/>
            <person name="Billault A."/>
            <person name="Brottier P."/>
            <person name="Camus J.-C."/>
            <person name="Cattolico L."/>
            <person name="Chandler M."/>
            <person name="Choisne N."/>
            <person name="Claudel-Renard C."/>
            <person name="Cunnac S."/>
            <person name="Demange N."/>
            <person name="Gaspin C."/>
            <person name="Lavie M."/>
            <person name="Moisan A."/>
            <person name="Robert C."/>
            <person name="Saurin W."/>
            <person name="Schiex T."/>
            <person name="Siguier P."/>
            <person name="Thebault P."/>
            <person name="Whalen M."/>
            <person name="Wincker P."/>
            <person name="Levy M."/>
            <person name="Weissenbach J."/>
            <person name="Boucher C.A."/>
        </authorList>
    </citation>
    <scope>NUCLEOTIDE SEQUENCE [LARGE SCALE GENOMIC DNA]</scope>
    <source>
        <strain>ATCC BAA-1114 / GMI1000</strain>
    </source>
</reference>
<keyword id="KW-0414">Isoprene biosynthesis</keyword>
<keyword id="KW-0456">Lyase</keyword>
<keyword id="KW-0479">Metal-binding</keyword>
<keyword id="KW-1185">Reference proteome</keyword>
<proteinExistence type="inferred from homology"/>
<dbReference type="EC" id="4.6.1.12" evidence="1"/>
<dbReference type="EMBL" id="AL646052">
    <property type="protein sequence ID" value="CAD15346.1"/>
    <property type="molecule type" value="Genomic_DNA"/>
</dbReference>
<dbReference type="RefSeq" id="WP_011001586.1">
    <property type="nucleotide sequence ID" value="NC_003295.1"/>
</dbReference>
<dbReference type="SMR" id="Q8XYW2"/>
<dbReference type="STRING" id="267608.RSc1644"/>
<dbReference type="EnsemblBacteria" id="CAD15346">
    <property type="protein sequence ID" value="CAD15346"/>
    <property type="gene ID" value="RSc1644"/>
</dbReference>
<dbReference type="KEGG" id="rso:RSc1644"/>
<dbReference type="eggNOG" id="COG0245">
    <property type="taxonomic scope" value="Bacteria"/>
</dbReference>
<dbReference type="HOGENOM" id="CLU_084630_2_0_4"/>
<dbReference type="UniPathway" id="UPA00056">
    <property type="reaction ID" value="UER00095"/>
</dbReference>
<dbReference type="Proteomes" id="UP000001436">
    <property type="component" value="Chromosome"/>
</dbReference>
<dbReference type="GO" id="GO:0008685">
    <property type="term" value="F:2-C-methyl-D-erythritol 2,4-cyclodiphosphate synthase activity"/>
    <property type="evidence" value="ECO:0007669"/>
    <property type="project" value="UniProtKB-UniRule"/>
</dbReference>
<dbReference type="GO" id="GO:0046872">
    <property type="term" value="F:metal ion binding"/>
    <property type="evidence" value="ECO:0007669"/>
    <property type="project" value="UniProtKB-KW"/>
</dbReference>
<dbReference type="GO" id="GO:0019288">
    <property type="term" value="P:isopentenyl diphosphate biosynthetic process, methylerythritol 4-phosphate pathway"/>
    <property type="evidence" value="ECO:0007669"/>
    <property type="project" value="UniProtKB-UniRule"/>
</dbReference>
<dbReference type="GO" id="GO:0016114">
    <property type="term" value="P:terpenoid biosynthetic process"/>
    <property type="evidence" value="ECO:0007669"/>
    <property type="project" value="InterPro"/>
</dbReference>
<dbReference type="CDD" id="cd00554">
    <property type="entry name" value="MECDP_synthase"/>
    <property type="match status" value="1"/>
</dbReference>
<dbReference type="FunFam" id="3.30.1330.50:FF:000001">
    <property type="entry name" value="2-C-methyl-D-erythritol 2,4-cyclodiphosphate synthase"/>
    <property type="match status" value="1"/>
</dbReference>
<dbReference type="Gene3D" id="3.30.1330.50">
    <property type="entry name" value="2-C-methyl-D-erythritol 2,4-cyclodiphosphate synthase"/>
    <property type="match status" value="1"/>
</dbReference>
<dbReference type="HAMAP" id="MF_00107">
    <property type="entry name" value="IspF"/>
    <property type="match status" value="1"/>
</dbReference>
<dbReference type="InterPro" id="IPR003526">
    <property type="entry name" value="MECDP_synthase"/>
</dbReference>
<dbReference type="InterPro" id="IPR020555">
    <property type="entry name" value="MECDP_synthase_CS"/>
</dbReference>
<dbReference type="InterPro" id="IPR036571">
    <property type="entry name" value="MECDP_synthase_sf"/>
</dbReference>
<dbReference type="NCBIfam" id="TIGR00151">
    <property type="entry name" value="ispF"/>
    <property type="match status" value="1"/>
</dbReference>
<dbReference type="PANTHER" id="PTHR43181">
    <property type="entry name" value="2-C-METHYL-D-ERYTHRITOL 2,4-CYCLODIPHOSPHATE SYNTHASE, CHLOROPLASTIC"/>
    <property type="match status" value="1"/>
</dbReference>
<dbReference type="PANTHER" id="PTHR43181:SF1">
    <property type="entry name" value="2-C-METHYL-D-ERYTHRITOL 2,4-CYCLODIPHOSPHATE SYNTHASE, CHLOROPLASTIC"/>
    <property type="match status" value="1"/>
</dbReference>
<dbReference type="Pfam" id="PF02542">
    <property type="entry name" value="YgbB"/>
    <property type="match status" value="1"/>
</dbReference>
<dbReference type="SUPFAM" id="SSF69765">
    <property type="entry name" value="IpsF-like"/>
    <property type="match status" value="1"/>
</dbReference>
<dbReference type="PROSITE" id="PS01350">
    <property type="entry name" value="ISPF"/>
    <property type="match status" value="1"/>
</dbReference>
<protein>
    <recommendedName>
        <fullName evidence="1">2-C-methyl-D-erythritol 2,4-cyclodiphosphate synthase</fullName>
        <shortName evidence="1">MECDP-synthase</shortName>
        <shortName evidence="1">MECPP-synthase</shortName>
        <shortName evidence="1">MECPS</shortName>
        <ecNumber evidence="1">4.6.1.12</ecNumber>
    </recommendedName>
</protein>